<organism>
    <name type="scientific">Oryctolagus cuniculus</name>
    <name type="common">Rabbit</name>
    <dbReference type="NCBI Taxonomy" id="9986"/>
    <lineage>
        <taxon>Eukaryota</taxon>
        <taxon>Metazoa</taxon>
        <taxon>Chordata</taxon>
        <taxon>Craniata</taxon>
        <taxon>Vertebrata</taxon>
        <taxon>Euteleostomi</taxon>
        <taxon>Mammalia</taxon>
        <taxon>Eutheria</taxon>
        <taxon>Euarchontoglires</taxon>
        <taxon>Glires</taxon>
        <taxon>Lagomorpha</taxon>
        <taxon>Leporidae</taxon>
        <taxon>Oryctolagus</taxon>
    </lineage>
</organism>
<feature type="chain" id="PRO_0000055699" description="Protein kinase C epsilon type">
    <location>
        <begin position="1"/>
        <end position="736"/>
    </location>
</feature>
<feature type="domain" description="C2" evidence="6">
    <location>
        <begin position="1"/>
        <end position="117"/>
    </location>
</feature>
<feature type="domain" description="Protein kinase" evidence="7">
    <location>
        <begin position="407"/>
        <end position="667"/>
    </location>
</feature>
<feature type="domain" description="AGC-kinase C-terminal" evidence="9">
    <location>
        <begin position="668"/>
        <end position="736"/>
    </location>
</feature>
<feature type="zinc finger region" description="Phorbol-ester/DAG-type 1" evidence="8">
    <location>
        <begin position="169"/>
        <end position="220"/>
    </location>
</feature>
<feature type="zinc finger region" description="Phorbol-ester/DAG-type 2" evidence="8">
    <location>
        <begin position="242"/>
        <end position="292"/>
    </location>
</feature>
<feature type="region of interest" description="Disordered" evidence="11">
    <location>
        <begin position="310"/>
        <end position="356"/>
    </location>
</feature>
<feature type="region of interest" description="Disordered" evidence="11">
    <location>
        <begin position="369"/>
        <end position="397"/>
    </location>
</feature>
<feature type="active site" description="Proton acceptor" evidence="7 10">
    <location>
        <position position="531"/>
    </location>
</feature>
<feature type="binding site" evidence="7">
    <location>
        <begin position="413"/>
        <end position="421"/>
    </location>
    <ligand>
        <name>ATP</name>
        <dbReference type="ChEBI" id="CHEBI:30616"/>
    </ligand>
</feature>
<feature type="binding site" evidence="7">
    <location>
        <position position="436"/>
    </location>
    <ligand>
        <name>ATP</name>
        <dbReference type="ChEBI" id="CHEBI:30616"/>
    </ligand>
</feature>
<feature type="modified residue" description="Phosphoserine" evidence="3">
    <location>
        <position position="62"/>
    </location>
</feature>
<feature type="modified residue" description="Phosphothreonine" evidence="4">
    <location>
        <position position="228"/>
    </location>
</feature>
<feature type="modified residue" description="Phosphoserine" evidence="3">
    <location>
        <position position="234"/>
    </location>
</feature>
<feature type="modified residue" description="Phosphothreonine" evidence="4">
    <location>
        <position position="309"/>
    </location>
</feature>
<feature type="modified residue" description="Phosphoserine" evidence="4">
    <location>
        <position position="316"/>
    </location>
</feature>
<feature type="modified residue" description="Phosphoserine" evidence="4">
    <location>
        <position position="329"/>
    </location>
</feature>
<feature type="modified residue" description="Phosphoserine" evidence="3">
    <location>
        <position position="337"/>
    </location>
</feature>
<feature type="modified residue" description="Phosphoserine; by GSK3-beta" evidence="4">
    <location>
        <position position="346"/>
    </location>
</feature>
<feature type="modified residue" description="Phosphothreonine" evidence="3">
    <location>
        <position position="349"/>
    </location>
</feature>
<feature type="modified residue" description="Phosphoserine; by MAPK11 and MAPK14" evidence="3">
    <location>
        <position position="350"/>
    </location>
</feature>
<feature type="modified residue" description="Phosphoserine; by autocatalysis" evidence="4">
    <location>
        <position position="368"/>
    </location>
</feature>
<feature type="modified residue" description="Phosphoserine" evidence="4">
    <location>
        <position position="388"/>
    </location>
</feature>
<feature type="modified residue" description="Phosphothreonine; by PDPK1" evidence="4">
    <location>
        <position position="565"/>
    </location>
</feature>
<feature type="modified residue" description="Phosphothreonine" evidence="3">
    <location>
        <position position="702"/>
    </location>
</feature>
<feature type="modified residue" description="Phosphothreonine; by autocatalysis" evidence="4 5">
    <location>
        <position position="709"/>
    </location>
</feature>
<feature type="modified residue" description="Phosphoserine; by autocatalysis" evidence="4">
    <location>
        <position position="728"/>
    </location>
</feature>
<name>KPCE_RABIT</name>
<sequence>MVVFNGLLKIKICEAVSLKPTAWSLRHAVGPRPQTFLLDPYIALNVDDSRIGQTATKQKTNSPAWHDEFVTDVCNGRKIELAVFHDAPIGYDDFVANCTIQFEELLQNGSRHFEDWIDLEPEGKVYVIIDLSGSSGEAPKDNEERVFRERMRPRKRQGAVRRRVHQVNGHKFMATYLRQPTYCSHCRDFIWGVIGKQGYQCQVCTCVVHKRCHELIITKVAGLKKQETPDEVGSQRFSVNMPHKFGIHNYKVPTFCDHCGSLLWGLLRQGLQCKVCKMNVHRRCETNVAPNCGVDARGIAKVLADLGVTPDKITNSGQRRKKLIGGAESPQPTSGSSPSEEDRSKSAPTSPCDQELKELENNIRKALSFDNRGEEHRAASSTDGQLGSPENGEVRQGQAKRLGLDEFNFIKVLGKGSFGKVMLAELKGKDEVYAVKVLKKDVILQDDDVDCTMTEKRILALARKHPYLTQLYCCFQTKDRLFFVMEYVNGGDLMFQIQRSRKFDEPRSRFYAAEVTSALMFLHQHGVIYRDLKLDNILLDAEGHCKLADFGMCKEGILNGVTTTTFCGTPDYIAPEILQELEYGPSVDWWALGVLMYEMMAGQPPFEADNEDDLFESILHDDVLYPVWLSKEAVSILKAFMTKNPHKRLGCVAAQNGEDAIKQHPFFKEIDWVLLEQKKIKPPFKPRIKTKRDVNNFDQDFTREEPVLTLVDEAIVKQINQEEFKGFSYFGEDLMP</sequence>
<evidence type="ECO:0000250" key="1"/>
<evidence type="ECO:0000250" key="2">
    <source>
        <dbReference type="UniProtKB" id="P09216"/>
    </source>
</evidence>
<evidence type="ECO:0000250" key="3">
    <source>
        <dbReference type="UniProtKB" id="P16054"/>
    </source>
</evidence>
<evidence type="ECO:0000250" key="4">
    <source>
        <dbReference type="UniProtKB" id="Q02156"/>
    </source>
</evidence>
<evidence type="ECO:0000255" key="5"/>
<evidence type="ECO:0000255" key="6">
    <source>
        <dbReference type="PROSITE-ProRule" id="PRU00041"/>
    </source>
</evidence>
<evidence type="ECO:0000255" key="7">
    <source>
        <dbReference type="PROSITE-ProRule" id="PRU00159"/>
    </source>
</evidence>
<evidence type="ECO:0000255" key="8">
    <source>
        <dbReference type="PROSITE-ProRule" id="PRU00226"/>
    </source>
</evidence>
<evidence type="ECO:0000255" key="9">
    <source>
        <dbReference type="PROSITE-ProRule" id="PRU00618"/>
    </source>
</evidence>
<evidence type="ECO:0000255" key="10">
    <source>
        <dbReference type="PROSITE-ProRule" id="PRU10027"/>
    </source>
</evidence>
<evidence type="ECO:0000256" key="11">
    <source>
        <dbReference type="SAM" id="MobiDB-lite"/>
    </source>
</evidence>
<evidence type="ECO:0000305" key="12"/>
<dbReference type="EC" id="2.7.11.13" evidence="4"/>
<dbReference type="EMBL" id="M20014">
    <property type="protein sequence ID" value="AAA31426.1"/>
    <property type="molecule type" value="mRNA"/>
</dbReference>
<dbReference type="PIR" id="A29880">
    <property type="entry name" value="KIRBCE"/>
</dbReference>
<dbReference type="RefSeq" id="NP_001075743.1">
    <property type="nucleotide sequence ID" value="NM_001082274.1"/>
</dbReference>
<dbReference type="SMR" id="P10830"/>
<dbReference type="FunCoup" id="P10830">
    <property type="interactions" value="651"/>
</dbReference>
<dbReference type="STRING" id="9986.ENSOCUP00000011861"/>
<dbReference type="PaxDb" id="9986-ENSOCUP00000011861"/>
<dbReference type="GeneID" id="100009103"/>
<dbReference type="KEGG" id="ocu:100009103"/>
<dbReference type="CTD" id="5581"/>
<dbReference type="eggNOG" id="KOG0694">
    <property type="taxonomic scope" value="Eukaryota"/>
</dbReference>
<dbReference type="InParanoid" id="P10830"/>
<dbReference type="OrthoDB" id="63267at2759"/>
<dbReference type="BRENDA" id="2.7.11.13">
    <property type="organism ID" value="1749"/>
</dbReference>
<dbReference type="Proteomes" id="UP000001811">
    <property type="component" value="Unplaced"/>
</dbReference>
<dbReference type="GO" id="GO:0071944">
    <property type="term" value="C:cell periphery"/>
    <property type="evidence" value="ECO:0000250"/>
    <property type="project" value="UniProtKB"/>
</dbReference>
<dbReference type="GO" id="GO:0005856">
    <property type="term" value="C:cytoskeleton"/>
    <property type="evidence" value="ECO:0007669"/>
    <property type="project" value="UniProtKB-SubCell"/>
</dbReference>
<dbReference type="GO" id="GO:0005634">
    <property type="term" value="C:nucleus"/>
    <property type="evidence" value="ECO:0007669"/>
    <property type="project" value="UniProtKB-SubCell"/>
</dbReference>
<dbReference type="GO" id="GO:0048471">
    <property type="term" value="C:perinuclear region of cytoplasm"/>
    <property type="evidence" value="ECO:0000250"/>
    <property type="project" value="UniProtKB"/>
</dbReference>
<dbReference type="GO" id="GO:0005886">
    <property type="term" value="C:plasma membrane"/>
    <property type="evidence" value="ECO:0007669"/>
    <property type="project" value="UniProtKB-SubCell"/>
</dbReference>
<dbReference type="GO" id="GO:0003785">
    <property type="term" value="F:actin monomer binding"/>
    <property type="evidence" value="ECO:0000250"/>
    <property type="project" value="UniProtKB"/>
</dbReference>
<dbReference type="GO" id="GO:0005524">
    <property type="term" value="F:ATP binding"/>
    <property type="evidence" value="ECO:0007669"/>
    <property type="project" value="UniProtKB-KW"/>
</dbReference>
<dbReference type="GO" id="GO:0004699">
    <property type="term" value="F:diacylglycerol-dependent, calcium-independent serine/threonine kinase activity"/>
    <property type="evidence" value="ECO:0007669"/>
    <property type="project" value="InterPro"/>
</dbReference>
<dbReference type="GO" id="GO:0004672">
    <property type="term" value="F:protein kinase activity"/>
    <property type="evidence" value="ECO:0000250"/>
    <property type="project" value="UniProtKB"/>
</dbReference>
<dbReference type="GO" id="GO:0106310">
    <property type="term" value="F:protein serine kinase activity"/>
    <property type="evidence" value="ECO:0007669"/>
    <property type="project" value="RHEA"/>
</dbReference>
<dbReference type="GO" id="GO:0008270">
    <property type="term" value="F:zinc ion binding"/>
    <property type="evidence" value="ECO:0007669"/>
    <property type="project" value="UniProtKB-KW"/>
</dbReference>
<dbReference type="GO" id="GO:0007155">
    <property type="term" value="P:cell adhesion"/>
    <property type="evidence" value="ECO:0007669"/>
    <property type="project" value="UniProtKB-KW"/>
</dbReference>
<dbReference type="GO" id="GO:0051301">
    <property type="term" value="P:cell division"/>
    <property type="evidence" value="ECO:0007669"/>
    <property type="project" value="UniProtKB-KW"/>
</dbReference>
<dbReference type="GO" id="GO:0031663">
    <property type="term" value="P:lipopolysaccharide-mediated signaling pathway"/>
    <property type="evidence" value="ECO:0000250"/>
    <property type="project" value="UniProtKB"/>
</dbReference>
<dbReference type="GO" id="GO:0030838">
    <property type="term" value="P:positive regulation of actin filament polymerization"/>
    <property type="evidence" value="ECO:0000250"/>
    <property type="project" value="UniProtKB"/>
</dbReference>
<dbReference type="GO" id="GO:0032467">
    <property type="term" value="P:positive regulation of cytokinesis"/>
    <property type="evidence" value="ECO:0000250"/>
    <property type="project" value="UniProtKB"/>
</dbReference>
<dbReference type="GO" id="GO:0010634">
    <property type="term" value="P:positive regulation of epithelial cell migration"/>
    <property type="evidence" value="ECO:0000250"/>
    <property type="project" value="UniProtKB"/>
</dbReference>
<dbReference type="GO" id="GO:0010763">
    <property type="term" value="P:positive regulation of fibroblast migration"/>
    <property type="evidence" value="ECO:0000250"/>
    <property type="project" value="UniProtKB"/>
</dbReference>
<dbReference type="GO" id="GO:0090303">
    <property type="term" value="P:positive regulation of wound healing"/>
    <property type="evidence" value="ECO:0000250"/>
    <property type="project" value="UniProtKB"/>
</dbReference>
<dbReference type="GO" id="GO:0035669">
    <property type="term" value="P:TRAM-dependent toll-like receptor 4 signaling pathway"/>
    <property type="evidence" value="ECO:0000250"/>
    <property type="project" value="UniProtKB"/>
</dbReference>
<dbReference type="CDD" id="cd20835">
    <property type="entry name" value="C1_nPKC_epsilon-like_rpt1"/>
    <property type="match status" value="1"/>
</dbReference>
<dbReference type="CDD" id="cd20838">
    <property type="entry name" value="C1_nPKC_epsilon-like_rpt2"/>
    <property type="match status" value="1"/>
</dbReference>
<dbReference type="CDD" id="cd04014">
    <property type="entry name" value="C2_PKC_epsilon"/>
    <property type="match status" value="1"/>
</dbReference>
<dbReference type="CDD" id="cd05591">
    <property type="entry name" value="STKc_nPKC_epsilon"/>
    <property type="match status" value="1"/>
</dbReference>
<dbReference type="FunFam" id="3.30.60.20:FF:000003">
    <property type="entry name" value="Protein kinase C delta"/>
    <property type="match status" value="1"/>
</dbReference>
<dbReference type="FunFam" id="1.10.510.10:FF:000126">
    <property type="entry name" value="Protein kinase C epsilon"/>
    <property type="match status" value="1"/>
</dbReference>
<dbReference type="FunFam" id="2.60.40.150:FF:000056">
    <property type="entry name" value="Protein kinase C epsilon"/>
    <property type="match status" value="1"/>
</dbReference>
<dbReference type="FunFam" id="3.30.200.20:FF:000601">
    <property type="entry name" value="Protein kinase C epsilon"/>
    <property type="match status" value="1"/>
</dbReference>
<dbReference type="FunFam" id="3.30.60.20:FF:000024">
    <property type="entry name" value="Protein kinase C epsilon"/>
    <property type="match status" value="1"/>
</dbReference>
<dbReference type="Gene3D" id="3.30.60.20">
    <property type="match status" value="2"/>
</dbReference>
<dbReference type="Gene3D" id="2.60.40.150">
    <property type="entry name" value="C2 domain"/>
    <property type="match status" value="1"/>
</dbReference>
<dbReference type="Gene3D" id="3.30.200.20">
    <property type="entry name" value="Phosphorylase Kinase, domain 1"/>
    <property type="match status" value="1"/>
</dbReference>
<dbReference type="Gene3D" id="1.10.510.10">
    <property type="entry name" value="Transferase(Phosphotransferase) domain 1"/>
    <property type="match status" value="1"/>
</dbReference>
<dbReference type="InterPro" id="IPR000961">
    <property type="entry name" value="AGC-kinase_C"/>
</dbReference>
<dbReference type="InterPro" id="IPR046349">
    <property type="entry name" value="C1-like_sf"/>
</dbReference>
<dbReference type="InterPro" id="IPR000008">
    <property type="entry name" value="C2_dom"/>
</dbReference>
<dbReference type="InterPro" id="IPR035892">
    <property type="entry name" value="C2_domain_sf"/>
</dbReference>
<dbReference type="InterPro" id="IPR020454">
    <property type="entry name" value="DAG/PE-bd"/>
</dbReference>
<dbReference type="InterPro" id="IPR011009">
    <property type="entry name" value="Kinase-like_dom_sf"/>
</dbReference>
<dbReference type="InterPro" id="IPR034669">
    <property type="entry name" value="nPKC_epsilon"/>
</dbReference>
<dbReference type="InterPro" id="IPR002219">
    <property type="entry name" value="PE/DAG-bd"/>
</dbReference>
<dbReference type="InterPro" id="IPR027274">
    <property type="entry name" value="PKC_epsilon"/>
</dbReference>
<dbReference type="InterPro" id="IPR017892">
    <property type="entry name" value="Pkinase_C"/>
</dbReference>
<dbReference type="InterPro" id="IPR014376">
    <property type="entry name" value="Prot_kin_PKC_delta"/>
</dbReference>
<dbReference type="InterPro" id="IPR000719">
    <property type="entry name" value="Prot_kinase_dom"/>
</dbReference>
<dbReference type="InterPro" id="IPR017441">
    <property type="entry name" value="Protein_kinase_ATP_BS"/>
</dbReference>
<dbReference type="InterPro" id="IPR008271">
    <property type="entry name" value="Ser/Thr_kinase_AS"/>
</dbReference>
<dbReference type="PANTHER" id="PTHR24351">
    <property type="entry name" value="RIBOSOMAL PROTEIN S6 KINASE"/>
    <property type="match status" value="1"/>
</dbReference>
<dbReference type="Pfam" id="PF00130">
    <property type="entry name" value="C1_1"/>
    <property type="match status" value="2"/>
</dbReference>
<dbReference type="Pfam" id="PF00168">
    <property type="entry name" value="C2"/>
    <property type="match status" value="1"/>
</dbReference>
<dbReference type="Pfam" id="PF00069">
    <property type="entry name" value="Pkinase"/>
    <property type="match status" value="1"/>
</dbReference>
<dbReference type="Pfam" id="PF00433">
    <property type="entry name" value="Pkinase_C"/>
    <property type="match status" value="1"/>
</dbReference>
<dbReference type="PIRSF" id="PIRSF000551">
    <property type="entry name" value="PKC_delta"/>
    <property type="match status" value="1"/>
</dbReference>
<dbReference type="PIRSF" id="PIRSF501106">
    <property type="entry name" value="Protein_kin_C_epsilon"/>
    <property type="match status" value="1"/>
</dbReference>
<dbReference type="PRINTS" id="PR00008">
    <property type="entry name" value="DAGPEDOMAIN"/>
</dbReference>
<dbReference type="SMART" id="SM00109">
    <property type="entry name" value="C1"/>
    <property type="match status" value="2"/>
</dbReference>
<dbReference type="SMART" id="SM00239">
    <property type="entry name" value="C2"/>
    <property type="match status" value="1"/>
</dbReference>
<dbReference type="SMART" id="SM00133">
    <property type="entry name" value="S_TK_X"/>
    <property type="match status" value="1"/>
</dbReference>
<dbReference type="SMART" id="SM00220">
    <property type="entry name" value="S_TKc"/>
    <property type="match status" value="1"/>
</dbReference>
<dbReference type="SUPFAM" id="SSF49562">
    <property type="entry name" value="C2 domain (Calcium/lipid-binding domain, CaLB)"/>
    <property type="match status" value="1"/>
</dbReference>
<dbReference type="SUPFAM" id="SSF57889">
    <property type="entry name" value="Cysteine-rich domain"/>
    <property type="match status" value="2"/>
</dbReference>
<dbReference type="SUPFAM" id="SSF56112">
    <property type="entry name" value="Protein kinase-like (PK-like)"/>
    <property type="match status" value="1"/>
</dbReference>
<dbReference type="PROSITE" id="PS51285">
    <property type="entry name" value="AGC_KINASE_CTER"/>
    <property type="match status" value="1"/>
</dbReference>
<dbReference type="PROSITE" id="PS50004">
    <property type="entry name" value="C2"/>
    <property type="match status" value="1"/>
</dbReference>
<dbReference type="PROSITE" id="PS00107">
    <property type="entry name" value="PROTEIN_KINASE_ATP"/>
    <property type="match status" value="1"/>
</dbReference>
<dbReference type="PROSITE" id="PS50011">
    <property type="entry name" value="PROTEIN_KINASE_DOM"/>
    <property type="match status" value="1"/>
</dbReference>
<dbReference type="PROSITE" id="PS00108">
    <property type="entry name" value="PROTEIN_KINASE_ST"/>
    <property type="match status" value="1"/>
</dbReference>
<dbReference type="PROSITE" id="PS00479">
    <property type="entry name" value="ZF_DAG_PE_1"/>
    <property type="match status" value="1"/>
</dbReference>
<dbReference type="PROSITE" id="PS50081">
    <property type="entry name" value="ZF_DAG_PE_2"/>
    <property type="match status" value="2"/>
</dbReference>
<comment type="function">
    <text evidence="1 4">Calcium-independent, phospholipid- and diacylglycerol (DAG)-dependent serine/threonine-protein kinase that plays essential roles in the regulation of multiple cellular processes linked to cytoskeletal proteins, such as cell adhesion, motility, migration and cell cycle, functions in neuron growth and ion channel regulation, and is involved in immune response, cancer cell invasion and regulation of apoptosis. Mediates cell adhesion to the extracellular matrix via integrin-dependent signaling, by mediating angiotensin-2-induced activation of integrin beta-1 (ITGB1) in cardiac fibroblasts. Phosphorylates MARCKS, which phosphorylates and activates PTK2/FAK, leading to the spread of cardiomyocytes. Involved in the control of the directional transport of ITGB1 in mesenchymal cells by phosphorylating vimentin (VIM), an intermediate filament (IF) protein. In epithelial cells, associates with and phosphorylates keratin-8 (KRT8), which induces targeting of desmoplakin at desmosomes and regulates cell-cell contact. Phosphorylates IQGAP1, which binds to CDC42, mediating epithelial cell-cell detachment prior to migration. During cytokinesis, forms a complex with YWHAB, which is crucial for daughter cell separation, and facilitates abscission by a mechanism which may implicate the regulation of RHOA. In cardiac myocytes, regulates myofilament function and excitation coupling at the Z-lines, where it is indirectly associated with F-actin via interaction with COPB1. During endothelin-induced cardiomyocyte hypertrophy, mediates activation of PTK2/FAK, which is critical for cardiomyocyte survival and regulation of sarcomere length. Plays a role in the pathogenesis of dilated cardiomyopathy via persistent phosphorylation of troponin I (TNNI3). Involved in nerve growth factor (NFG)-induced neurite outgrowth and neuron morphological change independently of its kinase activity, by inhibition of RHOA pathway, activation of CDC42 and cytoskeletal rearrangement. May be involved in presynaptic facilitation by mediating phorbol ester-induced synaptic potentiation. Phosphorylates gamma-aminobutyric acid receptor subunit gamma-2 (GABRG2), which reduces the response of GABA receptors to ethanol and benzodiazepines and may mediate acute tolerance to the intoxicating effects of ethanol. Upon PMA treatment, phosphorylates the capsaicin- and heat-activated cation channel TRPV1, which is required for bradykinin-induced sensitization of the heat response in nociceptive neurons. Is able to form a complex with PDLIM5 and N-type calcium channel, and may enhance channel activities and potentiates fast synaptic transmission by phosphorylating the pore-forming alpha subunit CACNA1B (CaV2.2). Downstream of TLR4, plays an important role in the lipopolysaccharide (LPS)-induced immune response by phosphorylating and activating TICAM2/TRAM, which in turn activates the transcription factor IRF3 and subsequent cytokines production. In differentiating erythroid progenitors, is regulated by EPO and controls the protection against the TNFSF10/TRAIL-mediated apoptosis, via BCL2. May be involved in the regulation of the insulin-induced phosphorylation and activation of AKT1 (By similarity). Phosphorylates NLRP5/MATER and may thereby modulate AKT pathway activation in cumulus cells (By similarity). Phosphorylates and activates LRRK1, which phosphorylates RAB proteins involved in intracellular trafficking (By similarity).</text>
</comment>
<comment type="catalytic activity">
    <reaction evidence="4">
        <text>L-seryl-[protein] + ATP = O-phospho-L-seryl-[protein] + ADP + H(+)</text>
        <dbReference type="Rhea" id="RHEA:17989"/>
        <dbReference type="Rhea" id="RHEA-COMP:9863"/>
        <dbReference type="Rhea" id="RHEA-COMP:11604"/>
        <dbReference type="ChEBI" id="CHEBI:15378"/>
        <dbReference type="ChEBI" id="CHEBI:29999"/>
        <dbReference type="ChEBI" id="CHEBI:30616"/>
        <dbReference type="ChEBI" id="CHEBI:83421"/>
        <dbReference type="ChEBI" id="CHEBI:456216"/>
        <dbReference type="EC" id="2.7.11.13"/>
    </reaction>
</comment>
<comment type="catalytic activity">
    <reaction evidence="4">
        <text>L-threonyl-[protein] + ATP = O-phospho-L-threonyl-[protein] + ADP + H(+)</text>
        <dbReference type="Rhea" id="RHEA:46608"/>
        <dbReference type="Rhea" id="RHEA-COMP:11060"/>
        <dbReference type="Rhea" id="RHEA-COMP:11605"/>
        <dbReference type="ChEBI" id="CHEBI:15378"/>
        <dbReference type="ChEBI" id="CHEBI:30013"/>
        <dbReference type="ChEBI" id="CHEBI:30616"/>
        <dbReference type="ChEBI" id="CHEBI:61977"/>
        <dbReference type="ChEBI" id="CHEBI:456216"/>
        <dbReference type="EC" id="2.7.11.13"/>
    </reaction>
</comment>
<comment type="activity regulation">
    <text>Novel PKCs (PRKCD, PRKCE, PRKCH and PRKCQ) are calcium-insensitive, but activated by diacylglycerol (DAG) and phosphatidylserine. Three specific sites; Thr-565 (activation loop of the kinase domain), Thr-709 (turn motif) and Ser-728 (hydrophobic region), need to be phosphorylated for its full activation.</text>
</comment>
<comment type="subunit">
    <text evidence="2 3 4">Forms a ternary complex with TRIM63 and RACK1/GN2BL1 (By similarity). Can form a complex with PDLIM5 and N-type calcium channel (By similarity). Interacts with COPB1 (By similarity). Interacts with DGKQ (By similarity). Interacts with STAT3 (By similarity). Interacts with YWHAB (By similarity). Interacts with HSP90AB1; promotes functional activation in a heat shock-dependent manner (By similarity). Interacts (via phorbol-ester/DAG-type 2 domain) with PRPH and VIM (By similarity). Interacts with NLRP5/MATER (By similarity).</text>
</comment>
<comment type="subcellular location">
    <subcellularLocation>
        <location evidence="4">Cytoplasm</location>
    </subcellularLocation>
    <subcellularLocation>
        <location evidence="4">Cytoplasm</location>
        <location evidence="4">Cytoskeleton</location>
    </subcellularLocation>
    <subcellularLocation>
        <location evidence="4">Cell membrane</location>
    </subcellularLocation>
    <subcellularLocation>
        <location evidence="3">Cytoplasm</location>
        <location evidence="3">Perinuclear region</location>
    </subcellularLocation>
    <subcellularLocation>
        <location evidence="3">Nucleus</location>
    </subcellularLocation>
    <text evidence="3 4">Translocated to plasma membrane in epithelial cells stimulated by HGF (By similarity). Associated with the Golgi at the perinuclear site in pre-passage fibroblasts (By similarity). In passaging cells, translocated to the cell periphery (By similarity). Translocated to the nucleus in PMA-treated cells (By similarity).</text>
</comment>
<comment type="domain">
    <text>The C1 domain, containing the phorbol ester/DAG-type region 1 (C1A) and 2 (C1B), is the diacylglycerol sensor and the C2 domain is a non-calcium binding domain.</text>
</comment>
<comment type="PTM">
    <text evidence="4">Phosphorylation on Thr-565 by PDPK1 triggers autophosphorylation on Ser-728. Phosphorylation in the hinge domain at Ser-350 by MAPK11 or MAPK14, Ser-346 by GSK3B and Ser-368 by autophosphorylation is required for interaction with YWHAB. In response to growth factors, phosphorylated at Thr-702 and Ser-728 by the mTORC2 complex, promoting autophosphorylation and activation of PRKCE (By similarity).</text>
</comment>
<comment type="similarity">
    <text evidence="12">Belongs to the protein kinase superfamily. AGC Ser/Thr protein kinase family. PKC subfamily.</text>
</comment>
<protein>
    <recommendedName>
        <fullName>Protein kinase C epsilon type</fullName>
        <ecNumber evidence="4">2.7.11.13</ecNumber>
    </recommendedName>
    <alternativeName>
        <fullName>nPKC-epsilon</fullName>
    </alternativeName>
</protein>
<gene>
    <name type="primary">PRKCE</name>
</gene>
<proteinExistence type="evidence at transcript level"/>
<keyword id="KW-0067">ATP-binding</keyword>
<keyword id="KW-0130">Cell adhesion</keyword>
<keyword id="KW-0131">Cell cycle</keyword>
<keyword id="KW-0132">Cell division</keyword>
<keyword id="KW-1003">Cell membrane</keyword>
<keyword id="KW-0963">Cytoplasm</keyword>
<keyword id="KW-0206">Cytoskeleton</keyword>
<keyword id="KW-0391">Immunity</keyword>
<keyword id="KW-0418">Kinase</keyword>
<keyword id="KW-0472">Membrane</keyword>
<keyword id="KW-0479">Metal-binding</keyword>
<keyword id="KW-0547">Nucleotide-binding</keyword>
<keyword id="KW-0539">Nucleus</keyword>
<keyword id="KW-0597">Phosphoprotein</keyword>
<keyword id="KW-1185">Reference proteome</keyword>
<keyword id="KW-0677">Repeat</keyword>
<keyword id="KW-0723">Serine/threonine-protein kinase</keyword>
<keyword id="KW-0808">Transferase</keyword>
<keyword id="KW-0862">Zinc</keyword>
<keyword id="KW-0863">Zinc-finger</keyword>
<accession>P10830</accession>
<reference key="1">
    <citation type="journal article" date="1988" name="Cell">
        <title>A novel phorbol ester receptor/protein kinase, nPKC, distantly related to the protein kinase C family.</title>
        <authorList>
            <person name="Ohno S."/>
            <person name="Akita Y."/>
            <person name="Konno Y."/>
            <person name="Imajoh S."/>
            <person name="Suzuki K."/>
        </authorList>
    </citation>
    <scope>NUCLEOTIDE SEQUENCE [MRNA]</scope>
</reference>